<organism>
    <name type="scientific">Azoarcus sp. (strain BH72)</name>
    <dbReference type="NCBI Taxonomy" id="418699"/>
    <lineage>
        <taxon>Bacteria</taxon>
        <taxon>Pseudomonadati</taxon>
        <taxon>Pseudomonadota</taxon>
        <taxon>Betaproteobacteria</taxon>
        <taxon>Rhodocyclales</taxon>
        <taxon>Zoogloeaceae</taxon>
        <taxon>Azoarcus</taxon>
    </lineage>
</organism>
<reference key="1">
    <citation type="journal article" date="2006" name="Nat. Biotechnol.">
        <title>Complete genome of the mutualistic, N2-fixing grass endophyte Azoarcus sp. strain BH72.</title>
        <authorList>
            <person name="Krause A."/>
            <person name="Ramakumar A."/>
            <person name="Bartels D."/>
            <person name="Battistoni F."/>
            <person name="Bekel T."/>
            <person name="Boch J."/>
            <person name="Boehm M."/>
            <person name="Friedrich F."/>
            <person name="Hurek T."/>
            <person name="Krause L."/>
            <person name="Linke B."/>
            <person name="McHardy A.C."/>
            <person name="Sarkar A."/>
            <person name="Schneiker S."/>
            <person name="Syed A.A."/>
            <person name="Thauer R."/>
            <person name="Vorhoelter F.-J."/>
            <person name="Weidner S."/>
            <person name="Puehler A."/>
            <person name="Reinhold-Hurek B."/>
            <person name="Kaiser O."/>
            <person name="Goesmann A."/>
        </authorList>
    </citation>
    <scope>NUCLEOTIDE SEQUENCE [LARGE SCALE GENOMIC DNA]</scope>
    <source>
        <strain>BH72</strain>
    </source>
</reference>
<protein>
    <recommendedName>
        <fullName evidence="2">D-alanine--D-alanine ligase</fullName>
        <ecNumber evidence="2">6.3.2.4</ecNumber>
    </recommendedName>
    <alternativeName>
        <fullName evidence="2">D-Ala-D-Ala ligase</fullName>
    </alternativeName>
    <alternativeName>
        <fullName evidence="2">D-alanylalanine synthetase</fullName>
    </alternativeName>
</protein>
<feature type="chain" id="PRO_0000341055" description="D-alanine--D-alanine ligase">
    <location>
        <begin position="1"/>
        <end position="304"/>
    </location>
</feature>
<feature type="domain" description="ATP-grasp" evidence="2">
    <location>
        <begin position="104"/>
        <end position="299"/>
    </location>
</feature>
<feature type="binding site" evidence="2">
    <location>
        <begin position="130"/>
        <end position="185"/>
    </location>
    <ligand>
        <name>ATP</name>
        <dbReference type="ChEBI" id="CHEBI:30616"/>
    </ligand>
</feature>
<feature type="binding site" evidence="2">
    <location>
        <position position="253"/>
    </location>
    <ligand>
        <name>Mg(2+)</name>
        <dbReference type="ChEBI" id="CHEBI:18420"/>
        <label>1</label>
    </ligand>
</feature>
<feature type="binding site" evidence="2">
    <location>
        <position position="266"/>
    </location>
    <ligand>
        <name>Mg(2+)</name>
        <dbReference type="ChEBI" id="CHEBI:18420"/>
        <label>1</label>
    </ligand>
</feature>
<feature type="binding site" evidence="2">
    <location>
        <position position="266"/>
    </location>
    <ligand>
        <name>Mg(2+)</name>
        <dbReference type="ChEBI" id="CHEBI:18420"/>
        <label>2</label>
    </ligand>
</feature>
<feature type="binding site" evidence="2">
    <location>
        <position position="268"/>
    </location>
    <ligand>
        <name>Mg(2+)</name>
        <dbReference type="ChEBI" id="CHEBI:18420"/>
        <label>2</label>
    </ligand>
</feature>
<accession>A1K3U8</accession>
<proteinExistence type="inferred from homology"/>
<gene>
    <name evidence="2" type="primary">ddl</name>
    <name type="ordered locus">azo0886</name>
</gene>
<name>DDL_AZOSB</name>
<comment type="function">
    <text evidence="2">Cell wall formation.</text>
</comment>
<comment type="catalytic activity">
    <reaction evidence="2">
        <text>2 D-alanine + ATP = D-alanyl-D-alanine + ADP + phosphate + H(+)</text>
        <dbReference type="Rhea" id="RHEA:11224"/>
        <dbReference type="ChEBI" id="CHEBI:15378"/>
        <dbReference type="ChEBI" id="CHEBI:30616"/>
        <dbReference type="ChEBI" id="CHEBI:43474"/>
        <dbReference type="ChEBI" id="CHEBI:57416"/>
        <dbReference type="ChEBI" id="CHEBI:57822"/>
        <dbReference type="ChEBI" id="CHEBI:456216"/>
        <dbReference type="EC" id="6.3.2.4"/>
    </reaction>
</comment>
<comment type="cofactor">
    <cofactor evidence="1">
        <name>Mg(2+)</name>
        <dbReference type="ChEBI" id="CHEBI:18420"/>
    </cofactor>
    <cofactor evidence="1">
        <name>Mn(2+)</name>
        <dbReference type="ChEBI" id="CHEBI:29035"/>
    </cofactor>
    <text evidence="1">Binds 2 magnesium or manganese ions per subunit.</text>
</comment>
<comment type="pathway">
    <text evidence="2">Cell wall biogenesis; peptidoglycan biosynthesis.</text>
</comment>
<comment type="subcellular location">
    <subcellularLocation>
        <location evidence="2">Cytoplasm</location>
    </subcellularLocation>
</comment>
<comment type="similarity">
    <text evidence="2">Belongs to the D-alanine--D-alanine ligase family.</text>
</comment>
<dbReference type="EC" id="6.3.2.4" evidence="2"/>
<dbReference type="EMBL" id="AM406670">
    <property type="protein sequence ID" value="CAL93503.1"/>
    <property type="molecule type" value="Genomic_DNA"/>
</dbReference>
<dbReference type="RefSeq" id="WP_011764620.1">
    <property type="nucleotide sequence ID" value="NC_008702.1"/>
</dbReference>
<dbReference type="SMR" id="A1K3U8"/>
<dbReference type="STRING" id="62928.azo0886"/>
<dbReference type="KEGG" id="aoa:dqs_0957"/>
<dbReference type="KEGG" id="azo:azo0886"/>
<dbReference type="eggNOG" id="COG1181">
    <property type="taxonomic scope" value="Bacteria"/>
</dbReference>
<dbReference type="HOGENOM" id="CLU_039268_1_2_4"/>
<dbReference type="OrthoDB" id="9813261at2"/>
<dbReference type="UniPathway" id="UPA00219"/>
<dbReference type="Proteomes" id="UP000002588">
    <property type="component" value="Chromosome"/>
</dbReference>
<dbReference type="GO" id="GO:0005829">
    <property type="term" value="C:cytosol"/>
    <property type="evidence" value="ECO:0007669"/>
    <property type="project" value="TreeGrafter"/>
</dbReference>
<dbReference type="GO" id="GO:0005524">
    <property type="term" value="F:ATP binding"/>
    <property type="evidence" value="ECO:0007669"/>
    <property type="project" value="UniProtKB-KW"/>
</dbReference>
<dbReference type="GO" id="GO:0008716">
    <property type="term" value="F:D-alanine-D-alanine ligase activity"/>
    <property type="evidence" value="ECO:0007669"/>
    <property type="project" value="UniProtKB-UniRule"/>
</dbReference>
<dbReference type="GO" id="GO:0046872">
    <property type="term" value="F:metal ion binding"/>
    <property type="evidence" value="ECO:0007669"/>
    <property type="project" value="UniProtKB-KW"/>
</dbReference>
<dbReference type="GO" id="GO:0071555">
    <property type="term" value="P:cell wall organization"/>
    <property type="evidence" value="ECO:0007669"/>
    <property type="project" value="UniProtKB-KW"/>
</dbReference>
<dbReference type="GO" id="GO:0009252">
    <property type="term" value="P:peptidoglycan biosynthetic process"/>
    <property type="evidence" value="ECO:0007669"/>
    <property type="project" value="UniProtKB-UniRule"/>
</dbReference>
<dbReference type="GO" id="GO:0008360">
    <property type="term" value="P:regulation of cell shape"/>
    <property type="evidence" value="ECO:0007669"/>
    <property type="project" value="UniProtKB-KW"/>
</dbReference>
<dbReference type="FunFam" id="3.40.50.20:FF:000013">
    <property type="entry name" value="D-alanine--D-alanine ligase"/>
    <property type="match status" value="1"/>
</dbReference>
<dbReference type="Gene3D" id="3.40.50.20">
    <property type="match status" value="1"/>
</dbReference>
<dbReference type="Gene3D" id="3.30.1490.20">
    <property type="entry name" value="ATP-grasp fold, A domain"/>
    <property type="match status" value="1"/>
</dbReference>
<dbReference type="Gene3D" id="3.30.470.20">
    <property type="entry name" value="ATP-grasp fold, B domain"/>
    <property type="match status" value="1"/>
</dbReference>
<dbReference type="HAMAP" id="MF_00047">
    <property type="entry name" value="Dala_Dala_lig"/>
    <property type="match status" value="1"/>
</dbReference>
<dbReference type="InterPro" id="IPR011761">
    <property type="entry name" value="ATP-grasp"/>
</dbReference>
<dbReference type="InterPro" id="IPR013815">
    <property type="entry name" value="ATP_grasp_subdomain_1"/>
</dbReference>
<dbReference type="InterPro" id="IPR000291">
    <property type="entry name" value="D-Ala_lig_Van_CS"/>
</dbReference>
<dbReference type="InterPro" id="IPR005905">
    <property type="entry name" value="D_ala_D_ala"/>
</dbReference>
<dbReference type="InterPro" id="IPR011095">
    <property type="entry name" value="Dala_Dala_lig_C"/>
</dbReference>
<dbReference type="InterPro" id="IPR011127">
    <property type="entry name" value="Dala_Dala_lig_N"/>
</dbReference>
<dbReference type="InterPro" id="IPR016185">
    <property type="entry name" value="PreATP-grasp_dom_sf"/>
</dbReference>
<dbReference type="NCBIfam" id="TIGR01205">
    <property type="entry name" value="D_ala_D_alaTIGR"/>
    <property type="match status" value="1"/>
</dbReference>
<dbReference type="NCBIfam" id="NF002378">
    <property type="entry name" value="PRK01372.1"/>
    <property type="match status" value="1"/>
</dbReference>
<dbReference type="PANTHER" id="PTHR23132">
    <property type="entry name" value="D-ALANINE--D-ALANINE LIGASE"/>
    <property type="match status" value="1"/>
</dbReference>
<dbReference type="PANTHER" id="PTHR23132:SF23">
    <property type="entry name" value="D-ALANINE--D-ALANINE LIGASE B"/>
    <property type="match status" value="1"/>
</dbReference>
<dbReference type="Pfam" id="PF07478">
    <property type="entry name" value="Dala_Dala_lig_C"/>
    <property type="match status" value="1"/>
</dbReference>
<dbReference type="Pfam" id="PF01820">
    <property type="entry name" value="Dala_Dala_lig_N"/>
    <property type="match status" value="1"/>
</dbReference>
<dbReference type="PIRSF" id="PIRSF039102">
    <property type="entry name" value="Ddl/VanB"/>
    <property type="match status" value="1"/>
</dbReference>
<dbReference type="SUPFAM" id="SSF56059">
    <property type="entry name" value="Glutathione synthetase ATP-binding domain-like"/>
    <property type="match status" value="1"/>
</dbReference>
<dbReference type="SUPFAM" id="SSF52440">
    <property type="entry name" value="PreATP-grasp domain"/>
    <property type="match status" value="1"/>
</dbReference>
<dbReference type="PROSITE" id="PS50975">
    <property type="entry name" value="ATP_GRASP"/>
    <property type="match status" value="1"/>
</dbReference>
<dbReference type="PROSITE" id="PS00843">
    <property type="entry name" value="DALA_DALA_LIGASE_1"/>
    <property type="match status" value="1"/>
</dbReference>
<dbReference type="PROSITE" id="PS00844">
    <property type="entry name" value="DALA_DALA_LIGASE_2"/>
    <property type="match status" value="1"/>
</dbReference>
<keyword id="KW-0067">ATP-binding</keyword>
<keyword id="KW-0133">Cell shape</keyword>
<keyword id="KW-0961">Cell wall biogenesis/degradation</keyword>
<keyword id="KW-0963">Cytoplasm</keyword>
<keyword id="KW-0436">Ligase</keyword>
<keyword id="KW-0460">Magnesium</keyword>
<keyword id="KW-0464">Manganese</keyword>
<keyword id="KW-0479">Metal-binding</keyword>
<keyword id="KW-0547">Nucleotide-binding</keyword>
<keyword id="KW-0573">Peptidoglycan synthesis</keyword>
<keyword id="KW-1185">Reference proteome</keyword>
<sequence length="304" mass="32635">MKQRFGKVAVLFGGSSAERDVSLMSGAAVLAALQGAGVDAHAFDPAERDLHILKEEGYDRVFIALHGRGGEDGTVQGALELMGIPYTGSGVMASALAMDKWRTKMVWLSCGLPTPRYAILDADSDFDAIARDLGLPIFVKPVHEGSSMGATKVTEAGQLRAAWELAARYDSLVIAEEFISGQELTAPFLDDRALPLVRIVAPDGNYDYQHKYFTDDTRYDCPCGLPQAEEEALQALILKSARVLGCRGWGRADLILTPEGRPYLLEMNTSPGMTGHSLVPMSARVAGMSFEALCLAILAGARLG</sequence>
<evidence type="ECO:0000250" key="1"/>
<evidence type="ECO:0000255" key="2">
    <source>
        <dbReference type="HAMAP-Rule" id="MF_00047"/>
    </source>
</evidence>